<dbReference type="EMBL" id="CP000046">
    <property type="protein sequence ID" value="AAW38090.1"/>
    <property type="molecule type" value="Genomic_DNA"/>
</dbReference>
<dbReference type="RefSeq" id="WP_000181404.1">
    <property type="nucleotide sequence ID" value="NZ_JBGOFO010000002.1"/>
</dbReference>
<dbReference type="SMR" id="Q5HGJ1"/>
<dbReference type="GeneID" id="98345556"/>
<dbReference type="KEGG" id="sac:SACOL1257"/>
<dbReference type="HOGENOM" id="CLU_103507_2_1_9"/>
<dbReference type="Proteomes" id="UP000000530">
    <property type="component" value="Chromosome"/>
</dbReference>
<dbReference type="GO" id="GO:0022625">
    <property type="term" value="C:cytosolic large ribosomal subunit"/>
    <property type="evidence" value="ECO:0007669"/>
    <property type="project" value="TreeGrafter"/>
</dbReference>
<dbReference type="GO" id="GO:0003735">
    <property type="term" value="F:structural constituent of ribosome"/>
    <property type="evidence" value="ECO:0007669"/>
    <property type="project" value="InterPro"/>
</dbReference>
<dbReference type="GO" id="GO:0006412">
    <property type="term" value="P:translation"/>
    <property type="evidence" value="ECO:0007669"/>
    <property type="project" value="UniProtKB-UniRule"/>
</dbReference>
<dbReference type="FunFam" id="2.30.30.790:FF:000001">
    <property type="entry name" value="50S ribosomal protein L19"/>
    <property type="match status" value="1"/>
</dbReference>
<dbReference type="Gene3D" id="2.30.30.790">
    <property type="match status" value="1"/>
</dbReference>
<dbReference type="HAMAP" id="MF_00402">
    <property type="entry name" value="Ribosomal_bL19"/>
    <property type="match status" value="1"/>
</dbReference>
<dbReference type="InterPro" id="IPR001857">
    <property type="entry name" value="Ribosomal_bL19"/>
</dbReference>
<dbReference type="InterPro" id="IPR018257">
    <property type="entry name" value="Ribosomal_bL19_CS"/>
</dbReference>
<dbReference type="InterPro" id="IPR038657">
    <property type="entry name" value="Ribosomal_bL19_sf"/>
</dbReference>
<dbReference type="InterPro" id="IPR008991">
    <property type="entry name" value="Translation_prot_SH3-like_sf"/>
</dbReference>
<dbReference type="NCBIfam" id="TIGR01024">
    <property type="entry name" value="rplS_bact"/>
    <property type="match status" value="1"/>
</dbReference>
<dbReference type="PANTHER" id="PTHR15680:SF9">
    <property type="entry name" value="LARGE RIBOSOMAL SUBUNIT PROTEIN BL19M"/>
    <property type="match status" value="1"/>
</dbReference>
<dbReference type="PANTHER" id="PTHR15680">
    <property type="entry name" value="RIBOSOMAL PROTEIN L19"/>
    <property type="match status" value="1"/>
</dbReference>
<dbReference type="Pfam" id="PF01245">
    <property type="entry name" value="Ribosomal_L19"/>
    <property type="match status" value="1"/>
</dbReference>
<dbReference type="PIRSF" id="PIRSF002191">
    <property type="entry name" value="Ribosomal_L19"/>
    <property type="match status" value="1"/>
</dbReference>
<dbReference type="PRINTS" id="PR00061">
    <property type="entry name" value="RIBOSOMALL19"/>
</dbReference>
<dbReference type="SUPFAM" id="SSF50104">
    <property type="entry name" value="Translation proteins SH3-like domain"/>
    <property type="match status" value="1"/>
</dbReference>
<dbReference type="PROSITE" id="PS01015">
    <property type="entry name" value="RIBOSOMAL_L19"/>
    <property type="match status" value="1"/>
</dbReference>
<reference key="1">
    <citation type="journal article" date="2005" name="J. Bacteriol.">
        <title>Insights on evolution of virulence and resistance from the complete genome analysis of an early methicillin-resistant Staphylococcus aureus strain and a biofilm-producing methicillin-resistant Staphylococcus epidermidis strain.</title>
        <authorList>
            <person name="Gill S.R."/>
            <person name="Fouts D.E."/>
            <person name="Archer G.L."/>
            <person name="Mongodin E.F."/>
            <person name="DeBoy R.T."/>
            <person name="Ravel J."/>
            <person name="Paulsen I.T."/>
            <person name="Kolonay J.F."/>
            <person name="Brinkac L.M."/>
            <person name="Beanan M.J."/>
            <person name="Dodson R.J."/>
            <person name="Daugherty S.C."/>
            <person name="Madupu R."/>
            <person name="Angiuoli S.V."/>
            <person name="Durkin A.S."/>
            <person name="Haft D.H."/>
            <person name="Vamathevan J.J."/>
            <person name="Khouri H."/>
            <person name="Utterback T.R."/>
            <person name="Lee C."/>
            <person name="Dimitrov G."/>
            <person name="Jiang L."/>
            <person name="Qin H."/>
            <person name="Weidman J."/>
            <person name="Tran K."/>
            <person name="Kang K.H."/>
            <person name="Hance I.R."/>
            <person name="Nelson K.E."/>
            <person name="Fraser C.M."/>
        </authorList>
    </citation>
    <scope>NUCLEOTIDE SEQUENCE [LARGE SCALE GENOMIC DNA]</scope>
    <source>
        <strain>COL</strain>
    </source>
</reference>
<gene>
    <name evidence="1" type="primary">rplS</name>
    <name type="ordered locus">SACOL1257</name>
</gene>
<proteinExistence type="inferred from homology"/>
<evidence type="ECO:0000255" key="1">
    <source>
        <dbReference type="HAMAP-Rule" id="MF_00402"/>
    </source>
</evidence>
<evidence type="ECO:0000305" key="2"/>
<protein>
    <recommendedName>
        <fullName evidence="1">Large ribosomal subunit protein bL19</fullName>
    </recommendedName>
    <alternativeName>
        <fullName evidence="2">50S ribosomal protein L19</fullName>
    </alternativeName>
</protein>
<feature type="chain" id="PRO_0000163528" description="Large ribosomal subunit protein bL19">
    <location>
        <begin position="1"/>
        <end position="116"/>
    </location>
</feature>
<keyword id="KW-0687">Ribonucleoprotein</keyword>
<keyword id="KW-0689">Ribosomal protein</keyword>
<organism>
    <name type="scientific">Staphylococcus aureus (strain COL)</name>
    <dbReference type="NCBI Taxonomy" id="93062"/>
    <lineage>
        <taxon>Bacteria</taxon>
        <taxon>Bacillati</taxon>
        <taxon>Bacillota</taxon>
        <taxon>Bacilli</taxon>
        <taxon>Bacillales</taxon>
        <taxon>Staphylococcaceae</taxon>
        <taxon>Staphylococcus</taxon>
    </lineage>
</organism>
<accession>Q5HGJ1</accession>
<comment type="function">
    <text evidence="1">This protein is located at the 30S-50S ribosomal subunit interface and may play a role in the structure and function of the aminoacyl-tRNA binding site.</text>
</comment>
<comment type="similarity">
    <text evidence="1">Belongs to the bacterial ribosomal protein bL19 family.</text>
</comment>
<sequence>MTNHKLIEAVTKSQLRTDLPSFRPGDTLRVHVRIIEGTRERIQVFEGVVIKRRGGGVSETFTVRKISSGVGVERTFPLHTPKIEKIEVKRRGKVRRAKLYYLRSLRGKAARIQEIR</sequence>
<name>RL19_STAAC</name>